<dbReference type="EMBL" id="AJ222685">
    <property type="protein sequence ID" value="CAA10940.1"/>
    <property type="molecule type" value="Genomic_DNA"/>
</dbReference>
<dbReference type="SMR" id="O79440"/>
<dbReference type="GO" id="GO:0005743">
    <property type="term" value="C:mitochondrial inner membrane"/>
    <property type="evidence" value="ECO:0007669"/>
    <property type="project" value="UniProtKB-SubCell"/>
</dbReference>
<dbReference type="GO" id="GO:0045275">
    <property type="term" value="C:respiratory chain complex III"/>
    <property type="evidence" value="ECO:0007669"/>
    <property type="project" value="InterPro"/>
</dbReference>
<dbReference type="GO" id="GO:0046872">
    <property type="term" value="F:metal ion binding"/>
    <property type="evidence" value="ECO:0007669"/>
    <property type="project" value="UniProtKB-KW"/>
</dbReference>
<dbReference type="GO" id="GO:0008121">
    <property type="term" value="F:ubiquinol-cytochrome-c reductase activity"/>
    <property type="evidence" value="ECO:0007669"/>
    <property type="project" value="InterPro"/>
</dbReference>
<dbReference type="GO" id="GO:0006122">
    <property type="term" value="P:mitochondrial electron transport, ubiquinol to cytochrome c"/>
    <property type="evidence" value="ECO:0007669"/>
    <property type="project" value="TreeGrafter"/>
</dbReference>
<dbReference type="CDD" id="cd00290">
    <property type="entry name" value="cytochrome_b_C"/>
    <property type="match status" value="1"/>
</dbReference>
<dbReference type="CDD" id="cd00284">
    <property type="entry name" value="Cytochrome_b_N"/>
    <property type="match status" value="1"/>
</dbReference>
<dbReference type="FunFam" id="1.20.810.10:FF:000002">
    <property type="entry name" value="Cytochrome b"/>
    <property type="match status" value="1"/>
</dbReference>
<dbReference type="Gene3D" id="1.20.810.10">
    <property type="entry name" value="Cytochrome Bc1 Complex, Chain C"/>
    <property type="match status" value="1"/>
</dbReference>
<dbReference type="InterPro" id="IPR005798">
    <property type="entry name" value="Cyt_b/b6_C"/>
</dbReference>
<dbReference type="InterPro" id="IPR036150">
    <property type="entry name" value="Cyt_b/b6_C_sf"/>
</dbReference>
<dbReference type="InterPro" id="IPR005797">
    <property type="entry name" value="Cyt_b/b6_N"/>
</dbReference>
<dbReference type="InterPro" id="IPR027387">
    <property type="entry name" value="Cytb/b6-like_sf"/>
</dbReference>
<dbReference type="InterPro" id="IPR030689">
    <property type="entry name" value="Cytochrome_b"/>
</dbReference>
<dbReference type="InterPro" id="IPR048260">
    <property type="entry name" value="Cytochrome_b_C_euk/bac"/>
</dbReference>
<dbReference type="InterPro" id="IPR048259">
    <property type="entry name" value="Cytochrome_b_N_euk/bac"/>
</dbReference>
<dbReference type="InterPro" id="IPR016174">
    <property type="entry name" value="Di-haem_cyt_TM"/>
</dbReference>
<dbReference type="PANTHER" id="PTHR19271">
    <property type="entry name" value="CYTOCHROME B"/>
    <property type="match status" value="1"/>
</dbReference>
<dbReference type="PANTHER" id="PTHR19271:SF16">
    <property type="entry name" value="CYTOCHROME B"/>
    <property type="match status" value="1"/>
</dbReference>
<dbReference type="Pfam" id="PF00032">
    <property type="entry name" value="Cytochrom_B_C"/>
    <property type="match status" value="1"/>
</dbReference>
<dbReference type="Pfam" id="PF00033">
    <property type="entry name" value="Cytochrome_B"/>
    <property type="match status" value="1"/>
</dbReference>
<dbReference type="PIRSF" id="PIRSF038885">
    <property type="entry name" value="COB"/>
    <property type="match status" value="1"/>
</dbReference>
<dbReference type="SUPFAM" id="SSF81648">
    <property type="entry name" value="a domain/subunit of cytochrome bc1 complex (Ubiquinol-cytochrome c reductase)"/>
    <property type="match status" value="1"/>
</dbReference>
<dbReference type="SUPFAM" id="SSF81342">
    <property type="entry name" value="Transmembrane di-heme cytochromes"/>
    <property type="match status" value="1"/>
</dbReference>
<dbReference type="PROSITE" id="PS51003">
    <property type="entry name" value="CYTB_CTER"/>
    <property type="match status" value="1"/>
</dbReference>
<dbReference type="PROSITE" id="PS51002">
    <property type="entry name" value="CYTB_NTER"/>
    <property type="match status" value="1"/>
</dbReference>
<feature type="chain" id="PRO_0000061325" description="Cytochrome b">
    <location>
        <begin position="1"/>
        <end position="379"/>
    </location>
</feature>
<feature type="transmembrane region" description="Helical" evidence="2">
    <location>
        <begin position="33"/>
        <end position="53"/>
    </location>
</feature>
<feature type="transmembrane region" description="Helical" evidence="2">
    <location>
        <begin position="77"/>
        <end position="98"/>
    </location>
</feature>
<feature type="transmembrane region" description="Helical" evidence="2">
    <location>
        <begin position="113"/>
        <end position="133"/>
    </location>
</feature>
<feature type="transmembrane region" description="Helical" evidence="2">
    <location>
        <begin position="178"/>
        <end position="198"/>
    </location>
</feature>
<feature type="transmembrane region" description="Helical" evidence="2">
    <location>
        <begin position="226"/>
        <end position="246"/>
    </location>
</feature>
<feature type="transmembrane region" description="Helical" evidence="2">
    <location>
        <begin position="288"/>
        <end position="308"/>
    </location>
</feature>
<feature type="transmembrane region" description="Helical" evidence="2">
    <location>
        <begin position="320"/>
        <end position="340"/>
    </location>
</feature>
<feature type="transmembrane region" description="Helical" evidence="2">
    <location>
        <begin position="347"/>
        <end position="367"/>
    </location>
</feature>
<feature type="binding site" description="axial binding residue" evidence="2">
    <location>
        <position position="83"/>
    </location>
    <ligand>
        <name>heme b</name>
        <dbReference type="ChEBI" id="CHEBI:60344"/>
        <label>b562</label>
    </ligand>
    <ligandPart>
        <name>Fe</name>
        <dbReference type="ChEBI" id="CHEBI:18248"/>
    </ligandPart>
</feature>
<feature type="binding site" description="axial binding residue" evidence="2">
    <location>
        <position position="97"/>
    </location>
    <ligand>
        <name>heme b</name>
        <dbReference type="ChEBI" id="CHEBI:60344"/>
        <label>b566</label>
    </ligand>
    <ligandPart>
        <name>Fe</name>
        <dbReference type="ChEBI" id="CHEBI:18248"/>
    </ligandPart>
</feature>
<feature type="binding site" description="axial binding residue" evidence="2">
    <location>
        <position position="182"/>
    </location>
    <ligand>
        <name>heme b</name>
        <dbReference type="ChEBI" id="CHEBI:60344"/>
        <label>b562</label>
    </ligand>
    <ligandPart>
        <name>Fe</name>
        <dbReference type="ChEBI" id="CHEBI:18248"/>
    </ligandPart>
</feature>
<feature type="binding site" description="axial binding residue" evidence="2">
    <location>
        <position position="196"/>
    </location>
    <ligand>
        <name>heme b</name>
        <dbReference type="ChEBI" id="CHEBI:60344"/>
        <label>b566</label>
    </ligand>
    <ligandPart>
        <name>Fe</name>
        <dbReference type="ChEBI" id="CHEBI:18248"/>
    </ligandPart>
</feature>
<feature type="binding site" evidence="2">
    <location>
        <position position="201"/>
    </location>
    <ligand>
        <name>a ubiquinone</name>
        <dbReference type="ChEBI" id="CHEBI:16389"/>
    </ligand>
</feature>
<keyword id="KW-0249">Electron transport</keyword>
<keyword id="KW-0349">Heme</keyword>
<keyword id="KW-0408">Iron</keyword>
<keyword id="KW-0472">Membrane</keyword>
<keyword id="KW-0479">Metal-binding</keyword>
<keyword id="KW-0496">Mitochondrion</keyword>
<keyword id="KW-0999">Mitochondrion inner membrane</keyword>
<keyword id="KW-0679">Respiratory chain</keyword>
<keyword id="KW-0812">Transmembrane</keyword>
<keyword id="KW-1133">Transmembrane helix</keyword>
<keyword id="KW-0813">Transport</keyword>
<keyword id="KW-0830">Ubiquinone</keyword>
<sequence length="379" mass="42621">MTNIRKTHPLMKIVNNAFIDLPAPSNISSWWNFGSLLGICLILQILTGLFLAMHYTSDTTTAFSSVTHICRDVNYGWIIRYMHANGASMFFICLFMHVGRGLYYGSYTFLETWNVGVILLFATMATAFMGYVLPWGQMSFWGATVITNLLSAIPYIGTNLVEWIWGGFSVDKATLTRFFAFHFILPFIIAALAMVHLLFLHETGSNNPTGITSDTDKIPFHPYYTIKDILGALLLILALMLLVLFAPDLLGDPDNYTPANPLNTPPHIKPEWYFLFAYAILRSIPNKLGGVLALVLSILILVLVPTLHTSKQRSMMFRPISQCIFWILVADLLTLTWIGGQPVEHPYTIIGQLASIMYFLLILVLMPVASTIENNLLKW</sequence>
<geneLocation type="mitochondrion"/>
<protein>
    <recommendedName>
        <fullName>Cytochrome b</fullName>
    </recommendedName>
    <alternativeName>
        <fullName>Complex III subunit 3</fullName>
    </alternativeName>
    <alternativeName>
        <fullName>Complex III subunit III</fullName>
    </alternativeName>
    <alternativeName>
        <fullName>Cytochrome b-c1 complex subunit 3</fullName>
    </alternativeName>
    <alternativeName>
        <fullName>Ubiquinol-cytochrome-c reductase complex cytochrome b subunit</fullName>
    </alternativeName>
</protein>
<accession>O79440</accession>
<name>CYB_ORYDA</name>
<gene>
    <name type="primary">MT-CYB</name>
    <name type="synonym">COB</name>
    <name type="synonym">CYTB</name>
    <name type="synonym">MTCYB</name>
</gene>
<comment type="function">
    <text evidence="2">Component of the ubiquinol-cytochrome c reductase complex (complex III or cytochrome b-c1 complex) that is part of the mitochondrial respiratory chain. The b-c1 complex mediates electron transfer from ubiquinol to cytochrome c. Contributes to the generation of a proton gradient across the mitochondrial membrane that is then used for ATP synthesis.</text>
</comment>
<comment type="cofactor">
    <cofactor evidence="2">
        <name>heme b</name>
        <dbReference type="ChEBI" id="CHEBI:60344"/>
    </cofactor>
    <text evidence="2">Binds 2 heme b groups non-covalently.</text>
</comment>
<comment type="subunit">
    <text evidence="2">The cytochrome bc1 complex contains 11 subunits: 3 respiratory subunits (MT-CYB, CYC1 and UQCRFS1), 2 core proteins (UQCRC1 and UQCRC2) and 6 low-molecular weight proteins (UQCRH/QCR6, UQCRB/QCR7, UQCRQ/QCR8, UQCR10/QCR9, UQCR11/QCR10 and a cleavage product of UQCRFS1). This cytochrome bc1 complex then forms a dimer.</text>
</comment>
<comment type="subcellular location">
    <subcellularLocation>
        <location evidence="2">Mitochondrion inner membrane</location>
        <topology evidence="2">Multi-pass membrane protein</topology>
    </subcellularLocation>
</comment>
<comment type="miscellaneous">
    <text evidence="1">Heme 1 (or BL or b562) is low-potential and absorbs at about 562 nm, and heme 2 (or BH or b566) is high-potential and absorbs at about 566 nm.</text>
</comment>
<comment type="similarity">
    <text evidence="3 4">Belongs to the cytochrome b family.</text>
</comment>
<comment type="caution">
    <text evidence="2">The full-length protein contains only eight transmembrane helices, not nine as predicted by bioinformatics tools.</text>
</comment>
<evidence type="ECO:0000250" key="1"/>
<evidence type="ECO:0000250" key="2">
    <source>
        <dbReference type="UniProtKB" id="P00157"/>
    </source>
</evidence>
<evidence type="ECO:0000255" key="3">
    <source>
        <dbReference type="PROSITE-ProRule" id="PRU00967"/>
    </source>
</evidence>
<evidence type="ECO:0000255" key="4">
    <source>
        <dbReference type="PROSITE-ProRule" id="PRU00968"/>
    </source>
</evidence>
<reference key="1">
    <citation type="journal article" date="1999" name="Mol. Phylogenet. Evol.">
        <title>The tribal radiation of the family Bovidae (Artiodactyla) and the evolution of the mitochondrial cytochrome b gene.</title>
        <authorList>
            <person name="Hassanin A."/>
            <person name="Douzery E.J.P."/>
        </authorList>
    </citation>
    <scope>NUCLEOTIDE SEQUENCE [GENOMIC DNA]</scope>
</reference>
<proteinExistence type="inferred from homology"/>
<organism>
    <name type="scientific">Oryx dammah</name>
    <name type="common">Scimitar-horned oryx</name>
    <dbReference type="NCBI Taxonomy" id="59534"/>
    <lineage>
        <taxon>Eukaryota</taxon>
        <taxon>Metazoa</taxon>
        <taxon>Chordata</taxon>
        <taxon>Craniata</taxon>
        <taxon>Vertebrata</taxon>
        <taxon>Euteleostomi</taxon>
        <taxon>Mammalia</taxon>
        <taxon>Eutheria</taxon>
        <taxon>Laurasiatheria</taxon>
        <taxon>Artiodactyla</taxon>
        <taxon>Ruminantia</taxon>
        <taxon>Pecora</taxon>
        <taxon>Bovidae</taxon>
        <taxon>Hippotraginae</taxon>
        <taxon>Oryx</taxon>
    </lineage>
</organism>